<comment type="function">
    <text evidence="1">Specifically methylates the N4 position of cytidine in position 1402 (C1402) of 16S rRNA.</text>
</comment>
<comment type="catalytic activity">
    <reaction evidence="1">
        <text>cytidine(1402) in 16S rRNA + S-adenosyl-L-methionine = N(4)-methylcytidine(1402) in 16S rRNA + S-adenosyl-L-homocysteine + H(+)</text>
        <dbReference type="Rhea" id="RHEA:42928"/>
        <dbReference type="Rhea" id="RHEA-COMP:10286"/>
        <dbReference type="Rhea" id="RHEA-COMP:10287"/>
        <dbReference type="ChEBI" id="CHEBI:15378"/>
        <dbReference type="ChEBI" id="CHEBI:57856"/>
        <dbReference type="ChEBI" id="CHEBI:59789"/>
        <dbReference type="ChEBI" id="CHEBI:74506"/>
        <dbReference type="ChEBI" id="CHEBI:82748"/>
        <dbReference type="EC" id="2.1.1.199"/>
    </reaction>
</comment>
<comment type="subcellular location">
    <subcellularLocation>
        <location evidence="1">Cytoplasm</location>
    </subcellularLocation>
</comment>
<comment type="similarity">
    <text evidence="1">Belongs to the methyltransferase superfamily. RsmH family.</text>
</comment>
<comment type="sequence caution" evidence="2">
    <conflict type="erroneous initiation">
        <sequence resource="EMBL-CDS" id="CAM62080"/>
    </conflict>
    <text>Truncated N-terminus.</text>
</comment>
<dbReference type="EC" id="2.1.1.199" evidence="1"/>
<dbReference type="EMBL" id="CU458896">
    <property type="protein sequence ID" value="CAM62080.1"/>
    <property type="status" value="ALT_INIT"/>
    <property type="molecule type" value="Genomic_DNA"/>
</dbReference>
<dbReference type="SMR" id="B1MP29"/>
<dbReference type="KEGG" id="mab:MAB_1998"/>
<dbReference type="Proteomes" id="UP000007137">
    <property type="component" value="Chromosome"/>
</dbReference>
<dbReference type="GO" id="GO:0005737">
    <property type="term" value="C:cytoplasm"/>
    <property type="evidence" value="ECO:0007669"/>
    <property type="project" value="UniProtKB-SubCell"/>
</dbReference>
<dbReference type="GO" id="GO:0071424">
    <property type="term" value="F:rRNA (cytosine-N4-)-methyltransferase activity"/>
    <property type="evidence" value="ECO:0007669"/>
    <property type="project" value="UniProtKB-UniRule"/>
</dbReference>
<dbReference type="GO" id="GO:0070475">
    <property type="term" value="P:rRNA base methylation"/>
    <property type="evidence" value="ECO:0007669"/>
    <property type="project" value="UniProtKB-UniRule"/>
</dbReference>
<dbReference type="FunFam" id="1.10.150.170:FF:000001">
    <property type="entry name" value="Ribosomal RNA small subunit methyltransferase H"/>
    <property type="match status" value="1"/>
</dbReference>
<dbReference type="Gene3D" id="1.10.150.170">
    <property type="entry name" value="Putative methyltransferase TM0872, insert domain"/>
    <property type="match status" value="1"/>
</dbReference>
<dbReference type="Gene3D" id="3.40.50.150">
    <property type="entry name" value="Vaccinia Virus protein VP39"/>
    <property type="match status" value="1"/>
</dbReference>
<dbReference type="HAMAP" id="MF_01007">
    <property type="entry name" value="16SrRNA_methyltr_H"/>
    <property type="match status" value="1"/>
</dbReference>
<dbReference type="InterPro" id="IPR002903">
    <property type="entry name" value="RsmH"/>
</dbReference>
<dbReference type="InterPro" id="IPR023397">
    <property type="entry name" value="SAM-dep_MeTrfase_MraW_recog"/>
</dbReference>
<dbReference type="InterPro" id="IPR029063">
    <property type="entry name" value="SAM-dependent_MTases_sf"/>
</dbReference>
<dbReference type="NCBIfam" id="TIGR00006">
    <property type="entry name" value="16S rRNA (cytosine(1402)-N(4))-methyltransferase RsmH"/>
    <property type="match status" value="1"/>
</dbReference>
<dbReference type="PANTHER" id="PTHR11265:SF0">
    <property type="entry name" value="12S RRNA N4-METHYLCYTIDINE METHYLTRANSFERASE"/>
    <property type="match status" value="1"/>
</dbReference>
<dbReference type="PANTHER" id="PTHR11265">
    <property type="entry name" value="S-ADENOSYL-METHYLTRANSFERASE MRAW"/>
    <property type="match status" value="1"/>
</dbReference>
<dbReference type="Pfam" id="PF01795">
    <property type="entry name" value="Methyltransf_5"/>
    <property type="match status" value="1"/>
</dbReference>
<dbReference type="SUPFAM" id="SSF81799">
    <property type="entry name" value="Putative methyltransferase TM0872, insert domain"/>
    <property type="match status" value="1"/>
</dbReference>
<dbReference type="SUPFAM" id="SSF53335">
    <property type="entry name" value="S-adenosyl-L-methionine-dependent methyltransferases"/>
    <property type="match status" value="1"/>
</dbReference>
<gene>
    <name evidence="1" type="primary">rsmH</name>
    <name type="synonym">mraW</name>
    <name type="ordered locus">MAB_1998</name>
</gene>
<evidence type="ECO:0000255" key="1">
    <source>
        <dbReference type="HAMAP-Rule" id="MF_01007"/>
    </source>
</evidence>
<evidence type="ECO:0000305" key="2"/>
<name>RSMH_MYCA9</name>
<feature type="chain" id="PRO_0000386984" description="Ribosomal RNA small subunit methyltransferase H">
    <location>
        <begin position="1"/>
        <end position="384"/>
    </location>
</feature>
<feature type="binding site" evidence="1">
    <location>
        <begin position="99"/>
        <end position="101"/>
    </location>
    <ligand>
        <name>S-adenosyl-L-methionine</name>
        <dbReference type="ChEBI" id="CHEBI:59789"/>
    </ligand>
</feature>
<feature type="binding site" evidence="1">
    <location>
        <position position="118"/>
    </location>
    <ligand>
        <name>S-adenosyl-L-methionine</name>
        <dbReference type="ChEBI" id="CHEBI:59789"/>
    </ligand>
</feature>
<feature type="binding site" evidence="1">
    <location>
        <position position="145"/>
    </location>
    <ligand>
        <name>S-adenosyl-L-methionine</name>
        <dbReference type="ChEBI" id="CHEBI:59789"/>
    </ligand>
</feature>
<feature type="binding site" evidence="1">
    <location>
        <position position="169"/>
    </location>
    <ligand>
        <name>S-adenosyl-L-methionine</name>
        <dbReference type="ChEBI" id="CHEBI:59789"/>
    </ligand>
</feature>
<feature type="binding site" evidence="1">
    <location>
        <position position="176"/>
    </location>
    <ligand>
        <name>S-adenosyl-L-methionine</name>
        <dbReference type="ChEBI" id="CHEBI:59789"/>
    </ligand>
</feature>
<keyword id="KW-0963">Cytoplasm</keyword>
<keyword id="KW-0489">Methyltransferase</keyword>
<keyword id="KW-1185">Reference proteome</keyword>
<keyword id="KW-0698">rRNA processing</keyword>
<keyword id="KW-0949">S-adenosyl-L-methionine</keyword>
<keyword id="KW-0808">Transferase</keyword>
<proteinExistence type="inferred from homology"/>
<organism>
    <name type="scientific">Mycobacteroides abscessus (strain ATCC 19977 / DSM 44196 / CCUG 20993 / CIP 104536 / JCM 13569 / NCTC 13031 / TMC 1543 / L948)</name>
    <name type="common">Mycobacterium abscessus</name>
    <dbReference type="NCBI Taxonomy" id="561007"/>
    <lineage>
        <taxon>Bacteria</taxon>
        <taxon>Bacillati</taxon>
        <taxon>Actinomycetota</taxon>
        <taxon>Actinomycetes</taxon>
        <taxon>Mycobacteriales</taxon>
        <taxon>Mycobacteriaceae</taxon>
        <taxon>Mycobacteroides</taxon>
        <taxon>Mycobacteroides abscessus</taxon>
    </lineage>
</organism>
<sequence>MAFSERTRAARPLSDTTLAYFPDARFAPSDRDRAARVRCTYQCSHTRSWRAVAVSDNDSRYGHIPVMLDRCYELLAPALTADSTDGSGAVLVDATLGAGGHTEHFLTMLPGLTVIGLDRDTNALDIARSRLAPFGTRFVGVHTRYDGLADALDGLGYRTTSSVDGVLFDLGVSSMQLDQAERGFAYSVDAPLDMRMNAQDELTAADILNTYSAVELSRVLSRFGEERFARRIADEIVRRRANEPFTRSGQLVELLYATIPAATRRTGGHPAKRTFQALRIAVNAELESLATAIPAAMAALRPGGRVAVMAYQSLEDKIVKAEFAAATASRSPIDLPVELPGDAPEFTAITRGAERANDEEIEVNPRSAPVRLRAVERVADRRNA</sequence>
<protein>
    <recommendedName>
        <fullName evidence="1">Ribosomal RNA small subunit methyltransferase H</fullName>
        <ecNumber evidence="1">2.1.1.199</ecNumber>
    </recommendedName>
    <alternativeName>
        <fullName evidence="1">16S rRNA m(4)C1402 methyltransferase</fullName>
    </alternativeName>
    <alternativeName>
        <fullName evidence="1">rRNA (cytosine-N(4)-)-methyltransferase RsmH</fullName>
    </alternativeName>
</protein>
<reference key="1">
    <citation type="journal article" date="2009" name="PLoS ONE">
        <title>Non mycobacterial virulence genes in the genome of the emerging pathogen Mycobacterium abscessus.</title>
        <authorList>
            <person name="Ripoll F."/>
            <person name="Pasek S."/>
            <person name="Schenowitz C."/>
            <person name="Dossat C."/>
            <person name="Barbe V."/>
            <person name="Rottman M."/>
            <person name="Macheras E."/>
            <person name="Heym B."/>
            <person name="Herrmann J.L."/>
            <person name="Daffe M."/>
            <person name="Brosch R."/>
            <person name="Risler J.L."/>
            <person name="Gaillard J.L."/>
        </authorList>
    </citation>
    <scope>NUCLEOTIDE SEQUENCE [LARGE SCALE GENOMIC DNA]</scope>
    <source>
        <strain>ATCC 19977 / DSM 44196 / CCUG 20993 / CIP 104536 / JCM 13569 / NCTC 13031 / TMC 1543 / L948</strain>
    </source>
</reference>
<accession>B1MP29</accession>